<geneLocation type="chloroplast"/>
<protein>
    <recommendedName>
        <fullName evidence="1">NAD(P)H-quinone oxidoreductase subunit I, chloroplastic</fullName>
        <ecNumber evidence="1">7.1.1.-</ecNumber>
    </recommendedName>
    <alternativeName>
        <fullName evidence="1">NAD(P)H dehydrogenase subunit I</fullName>
        <shortName evidence="1">NDH subunit I</shortName>
    </alternativeName>
    <alternativeName>
        <fullName evidence="1">NADH-plastoquinone oxidoreductase subunit I</fullName>
    </alternativeName>
</protein>
<proteinExistence type="inferred from homology"/>
<comment type="function">
    <text evidence="1">NDH shuttles electrons from NAD(P)H:plastoquinone, via FMN and iron-sulfur (Fe-S) centers, to quinones in the photosynthetic chain and possibly in a chloroplast respiratory chain. The immediate electron acceptor for the enzyme in this species is believed to be plastoquinone. Couples the redox reaction to proton translocation, and thus conserves the redox energy in a proton gradient.</text>
</comment>
<comment type="catalytic activity">
    <reaction evidence="1">
        <text>a plastoquinone + NADH + (n+1) H(+)(in) = a plastoquinol + NAD(+) + n H(+)(out)</text>
        <dbReference type="Rhea" id="RHEA:42608"/>
        <dbReference type="Rhea" id="RHEA-COMP:9561"/>
        <dbReference type="Rhea" id="RHEA-COMP:9562"/>
        <dbReference type="ChEBI" id="CHEBI:15378"/>
        <dbReference type="ChEBI" id="CHEBI:17757"/>
        <dbReference type="ChEBI" id="CHEBI:57540"/>
        <dbReference type="ChEBI" id="CHEBI:57945"/>
        <dbReference type="ChEBI" id="CHEBI:62192"/>
    </reaction>
</comment>
<comment type="catalytic activity">
    <reaction evidence="1">
        <text>a plastoquinone + NADPH + (n+1) H(+)(in) = a plastoquinol + NADP(+) + n H(+)(out)</text>
        <dbReference type="Rhea" id="RHEA:42612"/>
        <dbReference type="Rhea" id="RHEA-COMP:9561"/>
        <dbReference type="Rhea" id="RHEA-COMP:9562"/>
        <dbReference type="ChEBI" id="CHEBI:15378"/>
        <dbReference type="ChEBI" id="CHEBI:17757"/>
        <dbReference type="ChEBI" id="CHEBI:57783"/>
        <dbReference type="ChEBI" id="CHEBI:58349"/>
        <dbReference type="ChEBI" id="CHEBI:62192"/>
    </reaction>
</comment>
<comment type="cofactor">
    <cofactor evidence="1">
        <name>[4Fe-4S] cluster</name>
        <dbReference type="ChEBI" id="CHEBI:49883"/>
    </cofactor>
    <text evidence="1">Binds 2 [4Fe-4S] clusters per subunit.</text>
</comment>
<comment type="subunit">
    <text evidence="1">NDH is composed of at least 16 different subunits, 5 of which are encoded in the nucleus.</text>
</comment>
<comment type="subcellular location">
    <subcellularLocation>
        <location evidence="1">Plastid</location>
        <location evidence="1">Chloroplast thylakoid membrane</location>
        <topology evidence="1">Peripheral membrane protein</topology>
    </subcellularLocation>
</comment>
<comment type="similarity">
    <text evidence="1">Belongs to the complex I 23 kDa subunit family.</text>
</comment>
<sequence length="166" mass="19491">MFPMVTEFMNYGQQTVRAARYIGQGFIITLSHANRLPVTIQYPYEKLITSERFRGRIHFEFDKCIACEVCVRVCPIDLPVVDWKLETDIRKKRLLNYSIDFGICIFCGNCVEYCPTNCLSMTEEYELSTYDRHELNYNQIALGRLPMSIIDDYTIRTIFNLPEIKT</sequence>
<reference key="1">
    <citation type="submission" date="2003-01" db="EMBL/GenBank/DDBJ databases">
        <title>Chloroplast DNA phylogeny of tribe Heliantheae (Asteraceae).</title>
        <authorList>
            <person name="Panero J.L."/>
            <person name="Baldwin B.G."/>
            <person name="Schilling E.E."/>
            <person name="Clevinger J.A."/>
        </authorList>
    </citation>
    <scope>NUCLEOTIDE SEQUENCE [GENOMIC DNA]</scope>
</reference>
<dbReference type="EC" id="7.1.1.-" evidence="1"/>
<dbReference type="EMBL" id="AF383761">
    <property type="protein sequence ID" value="AAN61703.1"/>
    <property type="molecule type" value="Genomic_DNA"/>
</dbReference>
<dbReference type="SMR" id="Q8HVV1"/>
<dbReference type="GO" id="GO:0009535">
    <property type="term" value="C:chloroplast thylakoid membrane"/>
    <property type="evidence" value="ECO:0007669"/>
    <property type="project" value="UniProtKB-SubCell"/>
</dbReference>
<dbReference type="GO" id="GO:0051539">
    <property type="term" value="F:4 iron, 4 sulfur cluster binding"/>
    <property type="evidence" value="ECO:0007669"/>
    <property type="project" value="UniProtKB-KW"/>
</dbReference>
<dbReference type="GO" id="GO:0005506">
    <property type="term" value="F:iron ion binding"/>
    <property type="evidence" value="ECO:0007669"/>
    <property type="project" value="UniProtKB-UniRule"/>
</dbReference>
<dbReference type="GO" id="GO:0008137">
    <property type="term" value="F:NADH dehydrogenase (ubiquinone) activity"/>
    <property type="evidence" value="ECO:0007669"/>
    <property type="project" value="InterPro"/>
</dbReference>
<dbReference type="GO" id="GO:0048038">
    <property type="term" value="F:quinone binding"/>
    <property type="evidence" value="ECO:0007669"/>
    <property type="project" value="UniProtKB-KW"/>
</dbReference>
<dbReference type="GO" id="GO:0019684">
    <property type="term" value="P:photosynthesis, light reaction"/>
    <property type="evidence" value="ECO:0007669"/>
    <property type="project" value="UniProtKB-UniRule"/>
</dbReference>
<dbReference type="FunFam" id="3.30.70.3270:FF:000006">
    <property type="entry name" value="NAD(P)H-quinone oxidoreductase subunit I, chloroplastic"/>
    <property type="match status" value="1"/>
</dbReference>
<dbReference type="Gene3D" id="3.30.70.3270">
    <property type="match status" value="1"/>
</dbReference>
<dbReference type="HAMAP" id="MF_01351">
    <property type="entry name" value="NDH1_NuoI"/>
    <property type="match status" value="1"/>
</dbReference>
<dbReference type="InterPro" id="IPR017896">
    <property type="entry name" value="4Fe4S_Fe-S-bd"/>
</dbReference>
<dbReference type="InterPro" id="IPR017900">
    <property type="entry name" value="4Fe4S_Fe_S_CS"/>
</dbReference>
<dbReference type="InterPro" id="IPR010226">
    <property type="entry name" value="NADH_quinone_OxRdtase_chainI"/>
</dbReference>
<dbReference type="InterPro" id="IPR004497">
    <property type="entry name" value="NDHI"/>
</dbReference>
<dbReference type="NCBIfam" id="TIGR00403">
    <property type="entry name" value="ndhI"/>
    <property type="match status" value="1"/>
</dbReference>
<dbReference type="NCBIfam" id="TIGR01971">
    <property type="entry name" value="NuoI"/>
    <property type="match status" value="1"/>
</dbReference>
<dbReference type="NCBIfam" id="NF004537">
    <property type="entry name" value="PRK05888.1-3"/>
    <property type="match status" value="1"/>
</dbReference>
<dbReference type="PANTHER" id="PTHR47275">
    <property type="entry name" value="NAD(P)H-QUINONE OXIDOREDUCTASE SUBUNIT I, CHLOROPLASTIC"/>
    <property type="match status" value="1"/>
</dbReference>
<dbReference type="PANTHER" id="PTHR47275:SF1">
    <property type="entry name" value="NAD(P)H-QUINONE OXIDOREDUCTASE SUBUNIT I, CHLOROPLASTIC"/>
    <property type="match status" value="1"/>
</dbReference>
<dbReference type="Pfam" id="PF00037">
    <property type="entry name" value="Fer4"/>
    <property type="match status" value="2"/>
</dbReference>
<dbReference type="SUPFAM" id="SSF54862">
    <property type="entry name" value="4Fe-4S ferredoxins"/>
    <property type="match status" value="1"/>
</dbReference>
<dbReference type="PROSITE" id="PS00198">
    <property type="entry name" value="4FE4S_FER_1"/>
    <property type="match status" value="2"/>
</dbReference>
<dbReference type="PROSITE" id="PS51379">
    <property type="entry name" value="4FE4S_FER_2"/>
    <property type="match status" value="2"/>
</dbReference>
<feature type="chain" id="PRO_0000250762" description="NAD(P)H-quinone oxidoreductase subunit I, chloroplastic">
    <location>
        <begin position="1"/>
        <end position="166"/>
    </location>
</feature>
<feature type="domain" description="4Fe-4S ferredoxin-type 1" evidence="1">
    <location>
        <begin position="55"/>
        <end position="84"/>
    </location>
</feature>
<feature type="domain" description="4Fe-4S ferredoxin-type 2" evidence="1">
    <location>
        <begin position="95"/>
        <end position="124"/>
    </location>
</feature>
<feature type="binding site" evidence="1">
    <location>
        <position position="64"/>
    </location>
    <ligand>
        <name>[4Fe-4S] cluster</name>
        <dbReference type="ChEBI" id="CHEBI:49883"/>
        <label>1</label>
    </ligand>
</feature>
<feature type="binding site" evidence="1">
    <location>
        <position position="67"/>
    </location>
    <ligand>
        <name>[4Fe-4S] cluster</name>
        <dbReference type="ChEBI" id="CHEBI:49883"/>
        <label>1</label>
    </ligand>
</feature>
<feature type="binding site" evidence="1">
    <location>
        <position position="70"/>
    </location>
    <ligand>
        <name>[4Fe-4S] cluster</name>
        <dbReference type="ChEBI" id="CHEBI:49883"/>
        <label>1</label>
    </ligand>
</feature>
<feature type="binding site" evidence="1">
    <location>
        <position position="74"/>
    </location>
    <ligand>
        <name>[4Fe-4S] cluster</name>
        <dbReference type="ChEBI" id="CHEBI:49883"/>
        <label>2</label>
    </ligand>
</feature>
<feature type="binding site" evidence="1">
    <location>
        <position position="104"/>
    </location>
    <ligand>
        <name>[4Fe-4S] cluster</name>
        <dbReference type="ChEBI" id="CHEBI:49883"/>
        <label>2</label>
    </ligand>
</feature>
<feature type="binding site" evidence="1">
    <location>
        <position position="107"/>
    </location>
    <ligand>
        <name>[4Fe-4S] cluster</name>
        <dbReference type="ChEBI" id="CHEBI:49883"/>
        <label>2</label>
    </ligand>
</feature>
<feature type="binding site" evidence="1">
    <location>
        <position position="110"/>
    </location>
    <ligand>
        <name>[4Fe-4S] cluster</name>
        <dbReference type="ChEBI" id="CHEBI:49883"/>
        <label>2</label>
    </ligand>
</feature>
<feature type="binding site" evidence="1">
    <location>
        <position position="114"/>
    </location>
    <ligand>
        <name>[4Fe-4S] cluster</name>
        <dbReference type="ChEBI" id="CHEBI:49883"/>
        <label>1</label>
    </ligand>
</feature>
<evidence type="ECO:0000255" key="1">
    <source>
        <dbReference type="HAMAP-Rule" id="MF_01351"/>
    </source>
</evidence>
<keyword id="KW-0004">4Fe-4S</keyword>
<keyword id="KW-0150">Chloroplast</keyword>
<keyword id="KW-0408">Iron</keyword>
<keyword id="KW-0411">Iron-sulfur</keyword>
<keyword id="KW-0472">Membrane</keyword>
<keyword id="KW-0479">Metal-binding</keyword>
<keyword id="KW-0520">NAD</keyword>
<keyword id="KW-0521">NADP</keyword>
<keyword id="KW-0934">Plastid</keyword>
<keyword id="KW-0618">Plastoquinone</keyword>
<keyword id="KW-0874">Quinone</keyword>
<keyword id="KW-0677">Repeat</keyword>
<keyword id="KW-0793">Thylakoid</keyword>
<keyword id="KW-1278">Translocase</keyword>
<organism>
    <name type="scientific">Calea megacephala</name>
    <dbReference type="NCBI Taxonomy" id="183009"/>
    <lineage>
        <taxon>Eukaryota</taxon>
        <taxon>Viridiplantae</taxon>
        <taxon>Streptophyta</taxon>
        <taxon>Embryophyta</taxon>
        <taxon>Tracheophyta</taxon>
        <taxon>Spermatophyta</taxon>
        <taxon>Magnoliopsida</taxon>
        <taxon>eudicotyledons</taxon>
        <taxon>Gunneridae</taxon>
        <taxon>Pentapetalae</taxon>
        <taxon>asterids</taxon>
        <taxon>campanulids</taxon>
        <taxon>Asterales</taxon>
        <taxon>Asteraceae</taxon>
        <taxon>Asteroideae</taxon>
        <taxon>Heliantheae alliance</taxon>
        <taxon>Neurolaeneae</taxon>
        <taxon>Calea</taxon>
    </lineage>
</organism>
<name>NDHI_CALME</name>
<accession>Q8HVV1</accession>
<gene>
    <name evidence="1" type="primary">ndhI</name>
</gene>